<evidence type="ECO:0000255" key="1">
    <source>
        <dbReference type="HAMAP-Rule" id="MF_01325"/>
    </source>
</evidence>
<evidence type="ECO:0000256" key="2">
    <source>
        <dbReference type="SAM" id="MobiDB-lite"/>
    </source>
</evidence>
<evidence type="ECO:0000305" key="3"/>
<organism>
    <name type="scientific">Francisella tularensis subsp. holarctica (strain LVS)</name>
    <dbReference type="NCBI Taxonomy" id="376619"/>
    <lineage>
        <taxon>Bacteria</taxon>
        <taxon>Pseudomonadati</taxon>
        <taxon>Pseudomonadota</taxon>
        <taxon>Gammaproteobacteria</taxon>
        <taxon>Thiotrichales</taxon>
        <taxon>Francisellaceae</taxon>
        <taxon>Francisella</taxon>
    </lineage>
</organism>
<proteinExistence type="inferred from homology"/>
<comment type="function">
    <text evidence="1">One of the primary rRNA binding proteins, it binds directly near the 3'-end of the 23S rRNA, where it nucleates assembly of the 50S subunit.</text>
</comment>
<comment type="subunit">
    <text evidence="1">Part of the 50S ribosomal subunit. Forms a cluster with proteins L14 and L19.</text>
</comment>
<comment type="PTM">
    <text evidence="1">Methylated by PrmB.</text>
</comment>
<comment type="similarity">
    <text evidence="1">Belongs to the universal ribosomal protein uL3 family.</text>
</comment>
<protein>
    <recommendedName>
        <fullName evidence="1">Large ribosomal subunit protein uL3</fullName>
    </recommendedName>
    <alternativeName>
        <fullName evidence="3">50S ribosomal protein L3</fullName>
    </alternativeName>
</protein>
<keyword id="KW-0488">Methylation</keyword>
<keyword id="KW-1185">Reference proteome</keyword>
<keyword id="KW-0687">Ribonucleoprotein</keyword>
<keyword id="KW-0689">Ribosomal protein</keyword>
<keyword id="KW-0694">RNA-binding</keyword>
<keyword id="KW-0699">rRNA-binding</keyword>
<feature type="chain" id="PRO_0000241345" description="Large ribosomal subunit protein uL3">
    <location>
        <begin position="1"/>
        <end position="210"/>
    </location>
</feature>
<feature type="region of interest" description="Disordered" evidence="2">
    <location>
        <begin position="133"/>
        <end position="152"/>
    </location>
</feature>
<feature type="modified residue" description="N5-methylglutamine" evidence="1">
    <location>
        <position position="151"/>
    </location>
</feature>
<name>RL3_FRATH</name>
<gene>
    <name evidence="1" type="primary">rplC</name>
    <name type="ordered locus">FTL_0236</name>
</gene>
<sequence>MSLGLVGRKCGMTRIFTEDGVSIPVTVVQVEPNKVTQVKTVEKDGYNAIQVTTGFKKRSNVNKPMAGHYAKASVEPGRGLWEFTVDAAAEYQVGSSFDATMFEAGQKVDVRGVSKGKGFQGGVKRHNFATQDATHGNSLSHRVHGSTGQNQTPGRVFKNKKMAGHLGNENVTIQSLEVVRVDAENGLLLLKGGIPGSVGGDIIVTPAVKS</sequence>
<dbReference type="EMBL" id="AM233362">
    <property type="protein sequence ID" value="CAJ78677.1"/>
    <property type="molecule type" value="Genomic_DNA"/>
</dbReference>
<dbReference type="RefSeq" id="WP_003027202.1">
    <property type="nucleotide sequence ID" value="NZ_CP009694.1"/>
</dbReference>
<dbReference type="SMR" id="Q2A5H0"/>
<dbReference type="GeneID" id="75264261"/>
<dbReference type="KEGG" id="ftl:FTL_0236"/>
<dbReference type="Proteomes" id="UP000001944">
    <property type="component" value="Chromosome"/>
</dbReference>
<dbReference type="GO" id="GO:0022625">
    <property type="term" value="C:cytosolic large ribosomal subunit"/>
    <property type="evidence" value="ECO:0007669"/>
    <property type="project" value="TreeGrafter"/>
</dbReference>
<dbReference type="GO" id="GO:0019843">
    <property type="term" value="F:rRNA binding"/>
    <property type="evidence" value="ECO:0007669"/>
    <property type="project" value="UniProtKB-UniRule"/>
</dbReference>
<dbReference type="GO" id="GO:0003735">
    <property type="term" value="F:structural constituent of ribosome"/>
    <property type="evidence" value="ECO:0007669"/>
    <property type="project" value="InterPro"/>
</dbReference>
<dbReference type="GO" id="GO:0006412">
    <property type="term" value="P:translation"/>
    <property type="evidence" value="ECO:0007669"/>
    <property type="project" value="UniProtKB-UniRule"/>
</dbReference>
<dbReference type="FunFam" id="2.40.30.10:FF:000004">
    <property type="entry name" value="50S ribosomal protein L3"/>
    <property type="match status" value="1"/>
</dbReference>
<dbReference type="FunFam" id="3.30.160.810:FF:000001">
    <property type="entry name" value="50S ribosomal protein L3"/>
    <property type="match status" value="1"/>
</dbReference>
<dbReference type="Gene3D" id="3.30.160.810">
    <property type="match status" value="1"/>
</dbReference>
<dbReference type="Gene3D" id="2.40.30.10">
    <property type="entry name" value="Translation factors"/>
    <property type="match status" value="1"/>
</dbReference>
<dbReference type="HAMAP" id="MF_01325_B">
    <property type="entry name" value="Ribosomal_uL3_B"/>
    <property type="match status" value="1"/>
</dbReference>
<dbReference type="InterPro" id="IPR000597">
    <property type="entry name" value="Ribosomal_uL3"/>
</dbReference>
<dbReference type="InterPro" id="IPR019927">
    <property type="entry name" value="Ribosomal_uL3_bac/org-type"/>
</dbReference>
<dbReference type="InterPro" id="IPR019926">
    <property type="entry name" value="Ribosomal_uL3_CS"/>
</dbReference>
<dbReference type="InterPro" id="IPR009000">
    <property type="entry name" value="Transl_B-barrel_sf"/>
</dbReference>
<dbReference type="NCBIfam" id="TIGR03625">
    <property type="entry name" value="L3_bact"/>
    <property type="match status" value="1"/>
</dbReference>
<dbReference type="PANTHER" id="PTHR11229">
    <property type="entry name" value="50S RIBOSOMAL PROTEIN L3"/>
    <property type="match status" value="1"/>
</dbReference>
<dbReference type="PANTHER" id="PTHR11229:SF16">
    <property type="entry name" value="LARGE RIBOSOMAL SUBUNIT PROTEIN UL3C"/>
    <property type="match status" value="1"/>
</dbReference>
<dbReference type="Pfam" id="PF00297">
    <property type="entry name" value="Ribosomal_L3"/>
    <property type="match status" value="1"/>
</dbReference>
<dbReference type="SUPFAM" id="SSF50447">
    <property type="entry name" value="Translation proteins"/>
    <property type="match status" value="1"/>
</dbReference>
<dbReference type="PROSITE" id="PS00474">
    <property type="entry name" value="RIBOSOMAL_L3"/>
    <property type="match status" value="1"/>
</dbReference>
<reference key="1">
    <citation type="submission" date="2006-03" db="EMBL/GenBank/DDBJ databases">
        <title>Complete genome sequence of Francisella tularensis LVS (Live Vaccine Strain).</title>
        <authorList>
            <person name="Chain P."/>
            <person name="Larimer F."/>
            <person name="Land M."/>
            <person name="Stilwagen S."/>
            <person name="Larsson P."/>
            <person name="Bearden S."/>
            <person name="Chu M."/>
            <person name="Oyston P."/>
            <person name="Forsman M."/>
            <person name="Andersson S."/>
            <person name="Lindler L."/>
            <person name="Titball R."/>
            <person name="Garcia E."/>
        </authorList>
    </citation>
    <scope>NUCLEOTIDE SEQUENCE [LARGE SCALE GENOMIC DNA]</scope>
    <source>
        <strain>LVS</strain>
    </source>
</reference>
<accession>Q2A5H0</accession>